<name>TM101_PONAB</name>
<keyword id="KW-0472">Membrane</keyword>
<keyword id="KW-1185">Reference proteome</keyword>
<keyword id="KW-0812">Transmembrane</keyword>
<keyword id="KW-1133">Transmembrane helix</keyword>
<proteinExistence type="evidence at transcript level"/>
<dbReference type="EMBL" id="CR857115">
    <property type="protein sequence ID" value="CAH89419.1"/>
    <property type="molecule type" value="mRNA"/>
</dbReference>
<dbReference type="RefSeq" id="NP_001127144.1">
    <property type="nucleotide sequence ID" value="NM_001133672.1"/>
</dbReference>
<dbReference type="FunCoup" id="Q5RFN8">
    <property type="interactions" value="134"/>
</dbReference>
<dbReference type="Ensembl" id="ENSPPYT00000039943.1">
    <property type="protein sequence ID" value="ENSPPYP00000039658.1"/>
    <property type="gene ID" value="ENSPPYG00000031052.1"/>
</dbReference>
<dbReference type="GeneID" id="100174195"/>
<dbReference type="KEGG" id="pon:100174195"/>
<dbReference type="CTD" id="84336"/>
<dbReference type="eggNOG" id="ENOG502QRKU">
    <property type="taxonomic scope" value="Eukaryota"/>
</dbReference>
<dbReference type="GeneTree" id="ENSGT00390000011938"/>
<dbReference type="HOGENOM" id="CLU_094617_0_0_1"/>
<dbReference type="InParanoid" id="Q5RFN8"/>
<dbReference type="OMA" id="HVEFWNQ"/>
<dbReference type="OrthoDB" id="6082754at2759"/>
<dbReference type="TreeFam" id="TF332810"/>
<dbReference type="Proteomes" id="UP000001595">
    <property type="component" value="Chromosome 17"/>
</dbReference>
<dbReference type="GO" id="GO:0016020">
    <property type="term" value="C:membrane"/>
    <property type="evidence" value="ECO:0007669"/>
    <property type="project" value="UniProtKB-SubCell"/>
</dbReference>
<dbReference type="GO" id="GO:0043123">
    <property type="term" value="P:positive regulation of canonical NF-kappaB signal transduction"/>
    <property type="evidence" value="ECO:0007669"/>
    <property type="project" value="TreeGrafter"/>
</dbReference>
<dbReference type="InterPro" id="IPR029371">
    <property type="entry name" value="TMEM101"/>
</dbReference>
<dbReference type="PANTHER" id="PTHR31034">
    <property type="entry name" value="TRANSMEMBRANE PROTEIN 101"/>
    <property type="match status" value="1"/>
</dbReference>
<dbReference type="PANTHER" id="PTHR31034:SF2">
    <property type="entry name" value="TRANSMEMBRANE PROTEIN 101"/>
    <property type="match status" value="1"/>
</dbReference>
<dbReference type="Pfam" id="PF15111">
    <property type="entry name" value="TMEM101"/>
    <property type="match status" value="1"/>
</dbReference>
<protein>
    <recommendedName>
        <fullName>Transmembrane protein 101</fullName>
    </recommendedName>
</protein>
<evidence type="ECO:0000250" key="1"/>
<evidence type="ECO:0000255" key="2"/>
<evidence type="ECO:0000305" key="3"/>
<feature type="chain" id="PRO_0000240866" description="Transmembrane protein 101">
    <location>
        <begin position="1"/>
        <end position="257"/>
    </location>
</feature>
<feature type="transmembrane region" description="Helical" evidence="2">
    <location>
        <begin position="21"/>
        <end position="40"/>
    </location>
</feature>
<feature type="transmembrane region" description="Helical" evidence="2">
    <location>
        <begin position="52"/>
        <end position="72"/>
    </location>
</feature>
<feature type="transmembrane region" description="Helical" evidence="2">
    <location>
        <begin position="77"/>
        <end position="97"/>
    </location>
</feature>
<feature type="transmembrane region" description="Helical" evidence="2">
    <location>
        <begin position="110"/>
        <end position="130"/>
    </location>
</feature>
<feature type="transmembrane region" description="Helical" evidence="2">
    <location>
        <begin position="139"/>
        <end position="159"/>
    </location>
</feature>
<feature type="transmembrane region" description="Helical" evidence="2">
    <location>
        <begin position="182"/>
        <end position="202"/>
    </location>
</feature>
<feature type="transmembrane region" description="Helical" evidence="2">
    <location>
        <begin position="206"/>
        <end position="226"/>
    </location>
</feature>
<feature type="transmembrane region" description="Helical" evidence="2">
    <location>
        <begin position="233"/>
        <end position="253"/>
    </location>
</feature>
<accession>Q5RFN8</accession>
<reference key="1">
    <citation type="submission" date="2004-11" db="EMBL/GenBank/DDBJ databases">
        <authorList>
            <consortium name="The German cDNA consortium"/>
        </authorList>
    </citation>
    <scope>NUCLEOTIDE SEQUENCE [LARGE SCALE MRNA]</scope>
    <source>
        <tissue>Heart</tissue>
    </source>
</reference>
<organism>
    <name type="scientific">Pongo abelii</name>
    <name type="common">Sumatran orangutan</name>
    <name type="synonym">Pongo pygmaeus abelii</name>
    <dbReference type="NCBI Taxonomy" id="9601"/>
    <lineage>
        <taxon>Eukaryota</taxon>
        <taxon>Metazoa</taxon>
        <taxon>Chordata</taxon>
        <taxon>Craniata</taxon>
        <taxon>Vertebrata</taxon>
        <taxon>Euteleostomi</taxon>
        <taxon>Mammalia</taxon>
        <taxon>Eutheria</taxon>
        <taxon>Euarchontoglires</taxon>
        <taxon>Primates</taxon>
        <taxon>Haplorrhini</taxon>
        <taxon>Catarrhini</taxon>
        <taxon>Hominidae</taxon>
        <taxon>Pongo</taxon>
    </lineage>
</organism>
<gene>
    <name type="primary">TMEM101</name>
</gene>
<comment type="function">
    <text evidence="1">May activate NF-kappa-B signaling pathways.</text>
</comment>
<comment type="subcellular location">
    <subcellularLocation>
        <location evidence="3">Membrane</location>
        <topology evidence="3">Multi-pass membrane protein</topology>
    </subcellularLocation>
</comment>
<sequence length="257" mass="28781">MASKIGSRRWMLQLIMQLGSVLLTRCPFWGCFSQLMLYAERAEARRKPDIPVPYLYFDMGAAVLCASFMSFGVKRRWFALGAALQLAISTYAAYIGGYVHYGDWLKVRMYSRTVAIIGGFLVLASGAGELYRRKPRSRSLQSTGQVFLGIYLICVAYSLQHSKEDRLAYLNHLPGGELMIQLFFVLYGVLALAFLSGYYVTLAAQILAVLLPPVMLLIDGNVAYWHNTRRVEFWNQMKLLGESVGIFGTAVILATDG</sequence>